<organism>
    <name type="scientific">African swine fever virus (isolate Pig/Kenya/KEN-50/1950)</name>
    <name type="common">ASFV</name>
    <dbReference type="NCBI Taxonomy" id="561445"/>
    <lineage>
        <taxon>Viruses</taxon>
        <taxon>Varidnaviria</taxon>
        <taxon>Bamfordvirae</taxon>
        <taxon>Nucleocytoviricota</taxon>
        <taxon>Pokkesviricetes</taxon>
        <taxon>Asfuvirales</taxon>
        <taxon>Asfarviridae</taxon>
        <taxon>Asfivirus</taxon>
        <taxon>African swine fever virus</taxon>
    </lineage>
</organism>
<organismHost>
    <name type="scientific">Ornithodoros</name>
    <name type="common">relapsing fever ticks</name>
    <dbReference type="NCBI Taxonomy" id="6937"/>
</organismHost>
<organismHost>
    <name type="scientific">Phacochoerus aethiopicus</name>
    <name type="common">Warthog</name>
    <dbReference type="NCBI Taxonomy" id="85517"/>
</organismHost>
<organismHost>
    <name type="scientific">Phacochoerus africanus</name>
    <name type="common">Warthog</name>
    <dbReference type="NCBI Taxonomy" id="41426"/>
</organismHost>
<organismHost>
    <name type="scientific">Potamochoerus larvatus</name>
    <name type="common">Bushpig</name>
    <dbReference type="NCBI Taxonomy" id="273792"/>
</organismHost>
<organismHost>
    <name type="scientific">Sus scrofa</name>
    <name type="common">Pig</name>
    <dbReference type="NCBI Taxonomy" id="9823"/>
</organismHost>
<reference key="1">
    <citation type="submission" date="2003-03" db="EMBL/GenBank/DDBJ databases">
        <title>African swine fever virus genomes.</title>
        <authorList>
            <person name="Kutish G.F."/>
            <person name="Rock D.L."/>
        </authorList>
    </citation>
    <scope>NUCLEOTIDE SEQUENCE [LARGE SCALE GENOMIC DNA]</scope>
</reference>
<sequence>MDHYLKKLQDIYKKLEGHPFLFSPSKTNEKEFITLLNQALASTQLYRSIQQLFLTMYKLDPIGFVNYIKASKQEYLCLLINPKLVTKFLKITSFKIYINFRLKTFYISPNKYNNFYIAPSEEKANHLLKEEKTWAKIVEEGGEES</sequence>
<protein>
    <recommendedName>
        <fullName>Uncharacterized protein K145R</fullName>
        <shortName>pK145R</shortName>
    </recommendedName>
</protein>
<name>VF145_ASFK5</name>
<proteinExistence type="inferred from homology"/>
<keyword id="KW-0426">Late protein</keyword>
<keyword id="KW-0946">Virion</keyword>
<comment type="subcellular location">
    <subcellularLocation>
        <location evidence="1">Virion</location>
    </subcellularLocation>
</comment>
<comment type="induction">
    <text evidence="2">Expressed in the late phase of the viral replicative cycle.</text>
</comment>
<comment type="similarity">
    <text evidence="2">Belongs to the asfivirus K145R family.</text>
</comment>
<dbReference type="EMBL" id="AY261360">
    <property type="status" value="NOT_ANNOTATED_CDS"/>
    <property type="molecule type" value="Genomic_DNA"/>
</dbReference>
<dbReference type="Proteomes" id="UP000000861">
    <property type="component" value="Segment"/>
</dbReference>
<dbReference type="GO" id="GO:0044423">
    <property type="term" value="C:virion component"/>
    <property type="evidence" value="ECO:0007669"/>
    <property type="project" value="UniProtKB-KW"/>
</dbReference>
<evidence type="ECO:0000250" key="1">
    <source>
        <dbReference type="UniProtKB" id="Q07385"/>
    </source>
</evidence>
<evidence type="ECO:0000305" key="2"/>
<feature type="chain" id="PRO_0000373520" description="Uncharacterized protein K145R">
    <location>
        <begin position="1"/>
        <end position="145"/>
    </location>
</feature>
<gene>
    <name type="ordered locus">Ken-063</name>
</gene>
<accession>P0CA48</accession>